<keyword id="KW-0597">Phosphoprotein</keyword>
<keyword id="KW-1185">Reference proteome</keyword>
<keyword id="KW-0677">Repeat</keyword>
<keyword id="KW-0833">Ubl conjugation pathway</keyword>
<dbReference type="EMBL" id="Z46660">
    <property type="protein sequence ID" value="CAA86650.1"/>
    <property type="molecule type" value="Genomic_DNA"/>
</dbReference>
<dbReference type="EMBL" id="BK006946">
    <property type="protein sequence ID" value="DAA09809.1"/>
    <property type="molecule type" value="Genomic_DNA"/>
</dbReference>
<dbReference type="PIR" id="S49639">
    <property type="entry name" value="S49639"/>
</dbReference>
<dbReference type="RefSeq" id="NP_013622.1">
    <property type="nucleotide sequence ID" value="NM_001182447.1"/>
</dbReference>
<dbReference type="SMR" id="Q04511"/>
<dbReference type="BioGRID" id="35053">
    <property type="interactions" value="202"/>
</dbReference>
<dbReference type="ComplexPortal" id="CPX-3243">
    <property type="entry name" value="SCF-Ufo1 ubiquitin ligase complex"/>
</dbReference>
<dbReference type="DIP" id="DIP-1953N"/>
<dbReference type="FunCoup" id="Q04511">
    <property type="interactions" value="132"/>
</dbReference>
<dbReference type="IntAct" id="Q04511">
    <property type="interactions" value="8"/>
</dbReference>
<dbReference type="MINT" id="Q04511"/>
<dbReference type="STRING" id="4932.YML088W"/>
<dbReference type="iPTMnet" id="Q04511"/>
<dbReference type="PaxDb" id="4932-YML088W"/>
<dbReference type="PeptideAtlas" id="Q04511"/>
<dbReference type="EnsemblFungi" id="YML088W_mRNA">
    <property type="protein sequence ID" value="YML088W"/>
    <property type="gene ID" value="YML088W"/>
</dbReference>
<dbReference type="GeneID" id="854886"/>
<dbReference type="KEGG" id="sce:YML088W"/>
<dbReference type="AGR" id="SGD:S000004553"/>
<dbReference type="SGD" id="S000004553">
    <property type="gene designation" value="UFO1"/>
</dbReference>
<dbReference type="VEuPathDB" id="FungiDB:YML088W"/>
<dbReference type="eggNOG" id="KOG0274">
    <property type="taxonomic scope" value="Eukaryota"/>
</dbReference>
<dbReference type="HOGENOM" id="CLU_425266_0_0_1"/>
<dbReference type="InParanoid" id="Q04511"/>
<dbReference type="OMA" id="CTTPQGC"/>
<dbReference type="OrthoDB" id="2095648at2759"/>
<dbReference type="BioCyc" id="YEAST:G3O-32676-MONOMER"/>
<dbReference type="Reactome" id="R-SCE-983168">
    <property type="pathway name" value="Antigen processing: Ubiquitination &amp; Proteasome degradation"/>
</dbReference>
<dbReference type="UniPathway" id="UPA00143"/>
<dbReference type="BioGRID-ORCS" id="854886">
    <property type="hits" value="0 hits in 10 CRISPR screens"/>
</dbReference>
<dbReference type="PRO" id="PR:Q04511"/>
<dbReference type="Proteomes" id="UP000002311">
    <property type="component" value="Chromosome XIII"/>
</dbReference>
<dbReference type="RNAct" id="Q04511">
    <property type="molecule type" value="protein"/>
</dbReference>
<dbReference type="GO" id="GO:0005737">
    <property type="term" value="C:cytoplasm"/>
    <property type="evidence" value="ECO:0000314"/>
    <property type="project" value="SGD"/>
</dbReference>
<dbReference type="GO" id="GO:0005634">
    <property type="term" value="C:nucleus"/>
    <property type="evidence" value="ECO:0000314"/>
    <property type="project" value="SGD"/>
</dbReference>
<dbReference type="GO" id="GO:0019005">
    <property type="term" value="C:SCF ubiquitin ligase complex"/>
    <property type="evidence" value="ECO:0000314"/>
    <property type="project" value="SGD"/>
</dbReference>
<dbReference type="GO" id="GO:0030674">
    <property type="term" value="F:protein-macromolecule adaptor activity"/>
    <property type="evidence" value="ECO:0000247"/>
    <property type="project" value="SGD"/>
</dbReference>
<dbReference type="GO" id="GO:0071406">
    <property type="term" value="P:cellular response to methylmercury"/>
    <property type="evidence" value="ECO:0000315"/>
    <property type="project" value="SGD"/>
</dbReference>
<dbReference type="GO" id="GO:0006974">
    <property type="term" value="P:DNA damage response"/>
    <property type="evidence" value="ECO:0000315"/>
    <property type="project" value="SGD"/>
</dbReference>
<dbReference type="GO" id="GO:0016567">
    <property type="term" value="P:protein ubiquitination"/>
    <property type="evidence" value="ECO:0007669"/>
    <property type="project" value="UniProtKB-UniPathway"/>
</dbReference>
<dbReference type="GO" id="GO:0031146">
    <property type="term" value="P:SCF-dependent proteasomal ubiquitin-dependent protein catabolic process"/>
    <property type="evidence" value="ECO:0000315"/>
    <property type="project" value="SGD"/>
</dbReference>
<dbReference type="GO" id="GO:0006511">
    <property type="term" value="P:ubiquitin-dependent protein catabolic process"/>
    <property type="evidence" value="ECO:0000314"/>
    <property type="project" value="ComplexPortal"/>
</dbReference>
<dbReference type="CDD" id="cd22145">
    <property type="entry name" value="F-box_ScUFO1-like"/>
    <property type="match status" value="1"/>
</dbReference>
<dbReference type="Gene3D" id="1.20.1280.50">
    <property type="match status" value="1"/>
</dbReference>
<dbReference type="Gene3D" id="2.130.10.10">
    <property type="entry name" value="YVTN repeat-like/Quinoprotein amine dehydrogenase"/>
    <property type="match status" value="1"/>
</dbReference>
<dbReference type="InterPro" id="IPR036047">
    <property type="entry name" value="F-box-like_dom_sf"/>
</dbReference>
<dbReference type="InterPro" id="IPR001810">
    <property type="entry name" value="F-box_dom"/>
</dbReference>
<dbReference type="InterPro" id="IPR052301">
    <property type="entry name" value="SCF_F-box/WD-repeat"/>
</dbReference>
<dbReference type="InterPro" id="IPR003903">
    <property type="entry name" value="UIM_dom"/>
</dbReference>
<dbReference type="InterPro" id="IPR015943">
    <property type="entry name" value="WD40/YVTN_repeat-like_dom_sf"/>
</dbReference>
<dbReference type="InterPro" id="IPR036322">
    <property type="entry name" value="WD40_repeat_dom_sf"/>
</dbReference>
<dbReference type="PANTHER" id="PTHR14381">
    <property type="entry name" value="DACTYLIN"/>
    <property type="match status" value="1"/>
</dbReference>
<dbReference type="PANTHER" id="PTHR14381:SF1">
    <property type="entry name" value="F-BOX_WD REPEAT-CONTAINING PROTEIN 4"/>
    <property type="match status" value="1"/>
</dbReference>
<dbReference type="Pfam" id="PF12937">
    <property type="entry name" value="F-box-like"/>
    <property type="match status" value="1"/>
</dbReference>
<dbReference type="SMART" id="SM00256">
    <property type="entry name" value="FBOX"/>
    <property type="match status" value="1"/>
</dbReference>
<dbReference type="SMART" id="SM00726">
    <property type="entry name" value="UIM"/>
    <property type="match status" value="4"/>
</dbReference>
<dbReference type="SUPFAM" id="SSF81383">
    <property type="entry name" value="F-box domain"/>
    <property type="match status" value="1"/>
</dbReference>
<dbReference type="SUPFAM" id="SSF50978">
    <property type="entry name" value="WD40 repeat-like"/>
    <property type="match status" value="1"/>
</dbReference>
<dbReference type="PROSITE" id="PS50181">
    <property type="entry name" value="FBOX"/>
    <property type="match status" value="1"/>
</dbReference>
<dbReference type="PROSITE" id="PS50330">
    <property type="entry name" value="UIM"/>
    <property type="match status" value="3"/>
</dbReference>
<accession>Q04511</accession>
<accession>D6W0J5</accession>
<sequence length="668" mass="76860">MERPGLVLQDLPPEILINIFSHLDEKDLFTLQELSTHFRNLIHDEELWKNLFKSRVHTTHFPTFSQSSKFSVEYIERTRGLHHWQHNKAIRTKYTIIPTRNWDQPSIERIVFDYPRVAAYNDGTITILQLQNHKRQKKFKKLIYIPCTTPQGCSTMDFNINAAVFGRFDGRVFGKLLSNKSYLTPVMEFTGRHSAGVTAICNSESWDTSREDWSVSGSENGEIIWWCENKLVKMWKVSNRVIWKLAFFKDWTLIMDDEKLYIIHQMQELHSIDIPKDLDEQPMRVRFFKMDFGSMTLVLADLNNVYTISVNPNGNFGNLRKLEMPEQICAVEIDEKTSQREQNWQFAGDDGCYISLLTTQNTLYIINIRDLSSSGLKVQCKISFDEQVYVSQVTNLIVVVALPNVLQILNAMTGELIKTVLKTEKFPEFLKVSQDKIIMGSGNVLNYLKFVSSDSKKHHHSTKGKNTVSNKWNETLNTELQYYDEDEDLRRKRQSEISRLIDAYGGDLELSGDTDEENDIQLRIALLESQEAQARNQAEAGEPVGDDEDEQLRRALEESQLIYETQTNSSANHGNNTNDEIDEDDEEFLRAIRQSRVEDERRRHLRNHTTGRRNGPLSDDNFATYGAAESSERTSTENTIGSSVGVDASNNVDEDLQLAIALSLSEIN</sequence>
<organism>
    <name type="scientific">Saccharomyces cerevisiae (strain ATCC 204508 / S288c)</name>
    <name type="common">Baker's yeast</name>
    <dbReference type="NCBI Taxonomy" id="559292"/>
    <lineage>
        <taxon>Eukaryota</taxon>
        <taxon>Fungi</taxon>
        <taxon>Dikarya</taxon>
        <taxon>Ascomycota</taxon>
        <taxon>Saccharomycotina</taxon>
        <taxon>Saccharomycetes</taxon>
        <taxon>Saccharomycetales</taxon>
        <taxon>Saccharomycetaceae</taxon>
        <taxon>Saccharomyces</taxon>
    </lineage>
</organism>
<reference key="1">
    <citation type="journal article" date="1997" name="Nature">
        <title>The nucleotide sequence of Saccharomyces cerevisiae chromosome XIII.</title>
        <authorList>
            <person name="Bowman S."/>
            <person name="Churcher C.M."/>
            <person name="Badcock K."/>
            <person name="Brown D."/>
            <person name="Chillingworth T."/>
            <person name="Connor R."/>
            <person name="Dedman K."/>
            <person name="Devlin K."/>
            <person name="Gentles S."/>
            <person name="Hamlin N."/>
            <person name="Hunt S."/>
            <person name="Jagels K."/>
            <person name="Lye G."/>
            <person name="Moule S."/>
            <person name="Odell C."/>
            <person name="Pearson D."/>
            <person name="Rajandream M.A."/>
            <person name="Rice P."/>
            <person name="Skelton J."/>
            <person name="Walsh S.V."/>
            <person name="Whitehead S."/>
            <person name="Barrell B.G."/>
        </authorList>
    </citation>
    <scope>NUCLEOTIDE SEQUENCE [LARGE SCALE GENOMIC DNA]</scope>
    <source>
        <strain>ATCC 204508 / S288c</strain>
    </source>
</reference>
<reference key="2">
    <citation type="journal article" date="2014" name="G3 (Bethesda)">
        <title>The reference genome sequence of Saccharomyces cerevisiae: Then and now.</title>
        <authorList>
            <person name="Engel S.R."/>
            <person name="Dietrich F.S."/>
            <person name="Fisk D.G."/>
            <person name="Binkley G."/>
            <person name="Balakrishnan R."/>
            <person name="Costanzo M.C."/>
            <person name="Dwight S.S."/>
            <person name="Hitz B.C."/>
            <person name="Karra K."/>
            <person name="Nash R.S."/>
            <person name="Weng S."/>
            <person name="Wong E.D."/>
            <person name="Lloyd P."/>
            <person name="Skrzypek M.S."/>
            <person name="Miyasato S.R."/>
            <person name="Simison M."/>
            <person name="Cherry J.M."/>
        </authorList>
    </citation>
    <scope>GENOME REANNOTATION</scope>
    <source>
        <strain>ATCC 204508 / S288c</strain>
    </source>
</reference>
<reference key="3">
    <citation type="journal article" date="2000" name="Proc. Natl. Acad. Sci. U.S.A.">
        <title>Functions of the DNA damage response pathway target Ho endonuclease of yeast for degradation via the ubiquitin-26S proteasome system.</title>
        <authorList>
            <person name="Kaplun L."/>
            <person name="Ivantsiv Y."/>
            <person name="Kornitzer D."/>
            <person name="Raveh D."/>
        </authorList>
    </citation>
    <scope>FUNCTION IN HO DEGRADATION</scope>
</reference>
<reference key="4">
    <citation type="journal article" date="2001" name="Nat. Cell Biol.">
        <title>Skp1 forms multiple protein complexes, including RAVE, a regulator of V-ATPase assembly.</title>
        <authorList>
            <person name="Seol J.H."/>
            <person name="Shevchenko A."/>
            <person name="Shevchenko A."/>
            <person name="Deshaies R.J."/>
        </authorList>
    </citation>
    <scope>INTERACTION WITH SKP1</scope>
</reference>
<reference key="5">
    <citation type="journal article" date="2003" name="Nature">
        <title>Global analysis of protein expression in yeast.</title>
        <authorList>
            <person name="Ghaemmaghami S."/>
            <person name="Huh W.-K."/>
            <person name="Bower K."/>
            <person name="Howson R.W."/>
            <person name="Belle A."/>
            <person name="Dephoure N."/>
            <person name="O'Shea E.K."/>
            <person name="Weissman J.S."/>
        </authorList>
    </citation>
    <scope>LEVEL OF PROTEIN EXPRESSION [LARGE SCALE ANALYSIS]</scope>
</reference>
<reference key="6">
    <citation type="journal article" date="2004" name="Proteins">
        <title>Functional interaction of 13 yeast SCF complexes with a set of yeast E2 enzymes in vitro.</title>
        <authorList>
            <person name="Kus B.M."/>
            <person name="Caldon C.E."/>
            <person name="Andorn-Broza R."/>
            <person name="Edwards A.M."/>
        </authorList>
    </citation>
    <scope>INTERACTION WITH SKP1</scope>
    <scope>RECONSTITUTION OF THE SCF(UFO1) COMPLEX</scope>
</reference>
<reference key="7">
    <citation type="journal article" date="2008" name="Mol. Cell. Proteomics">
        <title>A multidimensional chromatography technology for in-depth phosphoproteome analysis.</title>
        <authorList>
            <person name="Albuquerque C.P."/>
            <person name="Smolka M.B."/>
            <person name="Payne S.H."/>
            <person name="Bafna V."/>
            <person name="Eng J."/>
            <person name="Zhou H."/>
        </authorList>
    </citation>
    <scope>PHOSPHORYLATION [LARGE SCALE ANALYSIS] AT THR-514</scope>
    <scope>IDENTIFICATION BY MASS SPECTROMETRY [LARGE SCALE ANALYSIS]</scope>
</reference>
<reference key="8">
    <citation type="journal article" date="2009" name="Science">
        <title>Global analysis of Cdk1 substrate phosphorylation sites provides insights into evolution.</title>
        <authorList>
            <person name="Holt L.J."/>
            <person name="Tuch B.B."/>
            <person name="Villen J."/>
            <person name="Johnson A.D."/>
            <person name="Gygi S.P."/>
            <person name="Morgan D.O."/>
        </authorList>
    </citation>
    <scope>PHOSPHORYLATION [LARGE SCALE ANALYSIS] AT SER-511 AND THR-514</scope>
    <scope>IDENTIFICATION BY MASS SPECTROMETRY [LARGE SCALE ANALYSIS]</scope>
</reference>
<proteinExistence type="evidence at protein level"/>
<name>UFO1_YEAST</name>
<evidence type="ECO:0000250" key="1"/>
<evidence type="ECO:0000255" key="2">
    <source>
        <dbReference type="PROSITE-ProRule" id="PRU00080"/>
    </source>
</evidence>
<evidence type="ECO:0000255" key="3">
    <source>
        <dbReference type="PROSITE-ProRule" id="PRU00213"/>
    </source>
</evidence>
<evidence type="ECO:0000256" key="4">
    <source>
        <dbReference type="SAM" id="MobiDB-lite"/>
    </source>
</evidence>
<evidence type="ECO:0000269" key="5">
    <source>
    </source>
</evidence>
<evidence type="ECO:0000269" key="6">
    <source>
    </source>
</evidence>
<evidence type="ECO:0000269" key="7">
    <source>
    </source>
</evidence>
<evidence type="ECO:0000269" key="8">
    <source>
    </source>
</evidence>
<evidence type="ECO:0007744" key="9">
    <source>
    </source>
</evidence>
<evidence type="ECO:0007744" key="10">
    <source>
    </source>
</evidence>
<protein>
    <recommendedName>
        <fullName>Ubiquitin ligase complex F-box protein UFO1</fullName>
    </recommendedName>
</protein>
<gene>
    <name type="primary">UFO1</name>
    <name type="ordered locus">YML088W</name>
</gene>
<feature type="chain" id="PRO_0000119970" description="Ubiquitin ligase complex F-box protein UFO1">
    <location>
        <begin position="1"/>
        <end position="668"/>
    </location>
</feature>
<feature type="domain" description="F-box" evidence="2">
    <location>
        <begin position="5"/>
        <end position="51"/>
    </location>
</feature>
<feature type="domain" description="UIM 1" evidence="3">
    <location>
        <begin position="547"/>
        <end position="566"/>
    </location>
</feature>
<feature type="domain" description="UIM 2" evidence="3">
    <location>
        <begin position="583"/>
        <end position="602"/>
    </location>
</feature>
<feature type="domain" description="UIM 3" evidence="3">
    <location>
        <begin position="651"/>
        <end position="668"/>
    </location>
</feature>
<feature type="region of interest" description="Disordered" evidence="4">
    <location>
        <begin position="564"/>
        <end position="585"/>
    </location>
</feature>
<feature type="region of interest" description="Disordered" evidence="4">
    <location>
        <begin position="599"/>
        <end position="639"/>
    </location>
</feature>
<feature type="compositionally biased region" description="Polar residues" evidence="4">
    <location>
        <begin position="564"/>
        <end position="578"/>
    </location>
</feature>
<feature type="modified residue" description="Phosphoserine" evidence="10">
    <location>
        <position position="511"/>
    </location>
</feature>
<feature type="modified residue" description="Phosphothreonine" evidence="9 10">
    <location>
        <position position="514"/>
    </location>
</feature>
<comment type="function">
    <text evidence="1 5">Substrate recognition component of a SCF (SKP1-CUL1-F-box protein) E3 ubiquitin-protein ligase complex which mediates the ubiquitination and subsequent proteasomal degradation of target proteins. Probably recognizes and binds to phosphorylated target proteins (By similarity).</text>
</comment>
<comment type="pathway">
    <text>Protein modification; protein ubiquitination.</text>
</comment>
<comment type="subunit">
    <text evidence="6 8">Interacts with SKP1. Component of the probable SCF(UFO1) complex containing CDC53, SKP1, RBX1 and UFO1.</text>
</comment>
<comment type="interaction">
    <interactant intactId="EBI-20020">
        <id>Q04511</id>
    </interactant>
    <interactant intactId="EBI-4090">
        <id>P52286</id>
        <label>SKP1</label>
    </interactant>
    <organismsDiffer>false</organismsDiffer>
    <experiments>7</experiments>
</comment>
<comment type="miscellaneous">
    <text evidence="7">Present with 639 molecules/cell in log phase SD medium.</text>
</comment>